<feature type="chain" id="PRO_1000018918" description="Bifunctional purine biosynthesis protein PurH">
    <location>
        <begin position="1"/>
        <end position="526"/>
    </location>
</feature>
<feature type="domain" description="MGS-like" evidence="2">
    <location>
        <begin position="1"/>
        <end position="147"/>
    </location>
</feature>
<comment type="catalytic activity">
    <reaction evidence="1">
        <text>(6R)-10-formyltetrahydrofolate + 5-amino-1-(5-phospho-beta-D-ribosyl)imidazole-4-carboxamide = 5-formamido-1-(5-phospho-D-ribosyl)imidazole-4-carboxamide + (6S)-5,6,7,8-tetrahydrofolate</text>
        <dbReference type="Rhea" id="RHEA:22192"/>
        <dbReference type="ChEBI" id="CHEBI:57453"/>
        <dbReference type="ChEBI" id="CHEBI:58467"/>
        <dbReference type="ChEBI" id="CHEBI:58475"/>
        <dbReference type="ChEBI" id="CHEBI:195366"/>
        <dbReference type="EC" id="2.1.2.3"/>
    </reaction>
</comment>
<comment type="catalytic activity">
    <reaction evidence="1">
        <text>IMP + H2O = 5-formamido-1-(5-phospho-D-ribosyl)imidazole-4-carboxamide</text>
        <dbReference type="Rhea" id="RHEA:18445"/>
        <dbReference type="ChEBI" id="CHEBI:15377"/>
        <dbReference type="ChEBI" id="CHEBI:58053"/>
        <dbReference type="ChEBI" id="CHEBI:58467"/>
        <dbReference type="EC" id="3.5.4.10"/>
    </reaction>
</comment>
<comment type="pathway">
    <text evidence="1">Purine metabolism; IMP biosynthesis via de novo pathway; 5-formamido-1-(5-phospho-D-ribosyl)imidazole-4-carboxamide from 5-amino-1-(5-phospho-D-ribosyl)imidazole-4-carboxamide (10-formyl THF route): step 1/1.</text>
</comment>
<comment type="pathway">
    <text evidence="1">Purine metabolism; IMP biosynthesis via de novo pathway; IMP from 5-formamido-1-(5-phospho-D-ribosyl)imidazole-4-carboxamide: step 1/1.</text>
</comment>
<comment type="domain">
    <text evidence="1">The IMP cyclohydrolase activity resides in the N-terminal region.</text>
</comment>
<comment type="similarity">
    <text evidence="1">Belongs to the PurH family.</text>
</comment>
<gene>
    <name evidence="1" type="primary">purH</name>
    <name type="ordered locus">NMC0963</name>
</gene>
<dbReference type="EC" id="2.1.2.3" evidence="1"/>
<dbReference type="EC" id="3.5.4.10" evidence="1"/>
<dbReference type="EMBL" id="AM421808">
    <property type="protein sequence ID" value="CAM10236.1"/>
    <property type="molecule type" value="Genomic_DNA"/>
</dbReference>
<dbReference type="RefSeq" id="WP_002226408.1">
    <property type="nucleotide sequence ID" value="NC_008767.1"/>
</dbReference>
<dbReference type="SMR" id="A1KTP9"/>
<dbReference type="KEGG" id="nmc:NMC0963"/>
<dbReference type="HOGENOM" id="CLU_016316_5_2_4"/>
<dbReference type="UniPathway" id="UPA00074">
    <property type="reaction ID" value="UER00133"/>
</dbReference>
<dbReference type="UniPathway" id="UPA00074">
    <property type="reaction ID" value="UER00135"/>
</dbReference>
<dbReference type="Proteomes" id="UP000002286">
    <property type="component" value="Chromosome"/>
</dbReference>
<dbReference type="GO" id="GO:0005829">
    <property type="term" value="C:cytosol"/>
    <property type="evidence" value="ECO:0007669"/>
    <property type="project" value="TreeGrafter"/>
</dbReference>
<dbReference type="GO" id="GO:0003937">
    <property type="term" value="F:IMP cyclohydrolase activity"/>
    <property type="evidence" value="ECO:0007669"/>
    <property type="project" value="UniProtKB-UniRule"/>
</dbReference>
<dbReference type="GO" id="GO:0004643">
    <property type="term" value="F:phosphoribosylaminoimidazolecarboxamide formyltransferase activity"/>
    <property type="evidence" value="ECO:0007669"/>
    <property type="project" value="UniProtKB-UniRule"/>
</dbReference>
<dbReference type="GO" id="GO:0006189">
    <property type="term" value="P:'de novo' IMP biosynthetic process"/>
    <property type="evidence" value="ECO:0007669"/>
    <property type="project" value="UniProtKB-UniRule"/>
</dbReference>
<dbReference type="CDD" id="cd01421">
    <property type="entry name" value="IMPCH"/>
    <property type="match status" value="1"/>
</dbReference>
<dbReference type="FunFam" id="3.40.140.20:FF:000001">
    <property type="entry name" value="Bifunctional purine biosynthesis protein PurH"/>
    <property type="match status" value="1"/>
</dbReference>
<dbReference type="FunFam" id="3.40.140.20:FF:000002">
    <property type="entry name" value="Bifunctional purine biosynthesis protein PurH"/>
    <property type="match status" value="1"/>
</dbReference>
<dbReference type="FunFam" id="3.40.50.1380:FF:000001">
    <property type="entry name" value="Bifunctional purine biosynthesis protein PurH"/>
    <property type="match status" value="1"/>
</dbReference>
<dbReference type="Gene3D" id="3.40.140.20">
    <property type="match status" value="2"/>
</dbReference>
<dbReference type="Gene3D" id="3.40.50.1380">
    <property type="entry name" value="Methylglyoxal synthase-like domain"/>
    <property type="match status" value="1"/>
</dbReference>
<dbReference type="HAMAP" id="MF_00139">
    <property type="entry name" value="PurH"/>
    <property type="match status" value="1"/>
</dbReference>
<dbReference type="InterPro" id="IPR024051">
    <property type="entry name" value="AICAR_Tfase_dup_dom_sf"/>
</dbReference>
<dbReference type="InterPro" id="IPR016193">
    <property type="entry name" value="Cytidine_deaminase-like"/>
</dbReference>
<dbReference type="InterPro" id="IPR011607">
    <property type="entry name" value="MGS-like_dom"/>
</dbReference>
<dbReference type="InterPro" id="IPR036914">
    <property type="entry name" value="MGS-like_dom_sf"/>
</dbReference>
<dbReference type="InterPro" id="IPR002695">
    <property type="entry name" value="PurH-like"/>
</dbReference>
<dbReference type="NCBIfam" id="NF002049">
    <property type="entry name" value="PRK00881.1"/>
    <property type="match status" value="1"/>
</dbReference>
<dbReference type="NCBIfam" id="TIGR00355">
    <property type="entry name" value="purH"/>
    <property type="match status" value="1"/>
</dbReference>
<dbReference type="PANTHER" id="PTHR11692:SF0">
    <property type="entry name" value="BIFUNCTIONAL PURINE BIOSYNTHESIS PROTEIN ATIC"/>
    <property type="match status" value="1"/>
</dbReference>
<dbReference type="PANTHER" id="PTHR11692">
    <property type="entry name" value="BIFUNCTIONAL PURINE BIOSYNTHESIS PROTEIN PURH"/>
    <property type="match status" value="1"/>
</dbReference>
<dbReference type="Pfam" id="PF01808">
    <property type="entry name" value="AICARFT_IMPCHas"/>
    <property type="match status" value="1"/>
</dbReference>
<dbReference type="Pfam" id="PF02142">
    <property type="entry name" value="MGS"/>
    <property type="match status" value="1"/>
</dbReference>
<dbReference type="PIRSF" id="PIRSF000414">
    <property type="entry name" value="AICARFT_IMPCHas"/>
    <property type="match status" value="1"/>
</dbReference>
<dbReference type="SMART" id="SM00798">
    <property type="entry name" value="AICARFT_IMPCHas"/>
    <property type="match status" value="1"/>
</dbReference>
<dbReference type="SMART" id="SM00851">
    <property type="entry name" value="MGS"/>
    <property type="match status" value="1"/>
</dbReference>
<dbReference type="SUPFAM" id="SSF53927">
    <property type="entry name" value="Cytidine deaminase-like"/>
    <property type="match status" value="1"/>
</dbReference>
<dbReference type="SUPFAM" id="SSF52335">
    <property type="entry name" value="Methylglyoxal synthase-like"/>
    <property type="match status" value="1"/>
</dbReference>
<dbReference type="PROSITE" id="PS51855">
    <property type="entry name" value="MGS"/>
    <property type="match status" value="1"/>
</dbReference>
<sequence>MPSIKRALISLSDKTGAVEFAQTLTKLGVEILSTGGTAKLLADAGVPVIEVADYTGFPEMLDGRVKTLHPKIHGGILGRRDLDEHVAKMEEHGIGNIDLVCVNLYPFAATIAKPNCTLEDAIENIDIGGPTMVRSAAKNWKHVAIVTDTADFPAIAAELEANNGALSDKTRFNLSRKAFSHTAQYDGMISNYLTSLSDDVLSGEPEIGEFPSQFNQSWIKVQDMRYGENPHQRAAFYRDIDPAAGSLSAYKQLQGKELSYNNIADADAAWEAVKSFDAPACVIVKHANPCGVAVAADTLTAYKLAYVTDTTSAFGGIIAFNREVDGETVKQITDNQFMEVLMAPKFTAEALEIAAAKKNVRVLEVPLEAGANRFELKRVGGGLLVQTPDIHRLNRADLKVVSKRQPTEQEWNDLMFVWNVAKYVKSNAIVFGKGGQTYGIGAGQMSRVDSTRIAARKAQDANLDLNGACAASDAFFPFRDGVDVIAEQGIKAIIHPAGSMRDQEVFDAADEHGIAMVVTDVRHFRH</sequence>
<accession>A1KTP9</accession>
<protein>
    <recommendedName>
        <fullName evidence="1">Bifunctional purine biosynthesis protein PurH</fullName>
    </recommendedName>
    <domain>
        <recommendedName>
            <fullName evidence="1">Phosphoribosylaminoimidazolecarboxamide formyltransferase</fullName>
            <ecNumber evidence="1">2.1.2.3</ecNumber>
        </recommendedName>
        <alternativeName>
            <fullName evidence="1">AICAR transformylase</fullName>
        </alternativeName>
    </domain>
    <domain>
        <recommendedName>
            <fullName evidence="1">IMP cyclohydrolase</fullName>
            <ecNumber evidence="1">3.5.4.10</ecNumber>
        </recommendedName>
        <alternativeName>
            <fullName evidence="1">ATIC</fullName>
        </alternativeName>
        <alternativeName>
            <fullName evidence="1">IMP synthase</fullName>
        </alternativeName>
        <alternativeName>
            <fullName evidence="1">Inosinicase</fullName>
        </alternativeName>
    </domain>
</protein>
<evidence type="ECO:0000255" key="1">
    <source>
        <dbReference type="HAMAP-Rule" id="MF_00139"/>
    </source>
</evidence>
<evidence type="ECO:0000255" key="2">
    <source>
        <dbReference type="PROSITE-ProRule" id="PRU01202"/>
    </source>
</evidence>
<reference key="1">
    <citation type="journal article" date="2007" name="PLoS Genet.">
        <title>Meningococcal genetic variation mechanisms viewed through comparative analysis of serogroup C strain FAM18.</title>
        <authorList>
            <person name="Bentley S.D."/>
            <person name="Vernikos G.S."/>
            <person name="Snyder L.A.S."/>
            <person name="Churcher C."/>
            <person name="Arrowsmith C."/>
            <person name="Chillingworth T."/>
            <person name="Cronin A."/>
            <person name="Davis P.H."/>
            <person name="Holroyd N.E."/>
            <person name="Jagels K."/>
            <person name="Maddison M."/>
            <person name="Moule S."/>
            <person name="Rabbinowitsch E."/>
            <person name="Sharp S."/>
            <person name="Unwin L."/>
            <person name="Whitehead S."/>
            <person name="Quail M.A."/>
            <person name="Achtman M."/>
            <person name="Barrell B.G."/>
            <person name="Saunders N.J."/>
            <person name="Parkhill J."/>
        </authorList>
    </citation>
    <scope>NUCLEOTIDE SEQUENCE [LARGE SCALE GENOMIC DNA]</scope>
    <source>
        <strain>ATCC 700532 / DSM 15464 / FAM18</strain>
    </source>
</reference>
<organism>
    <name type="scientific">Neisseria meningitidis serogroup C / serotype 2a (strain ATCC 700532 / DSM 15464 / FAM18)</name>
    <dbReference type="NCBI Taxonomy" id="272831"/>
    <lineage>
        <taxon>Bacteria</taxon>
        <taxon>Pseudomonadati</taxon>
        <taxon>Pseudomonadota</taxon>
        <taxon>Betaproteobacteria</taxon>
        <taxon>Neisseriales</taxon>
        <taxon>Neisseriaceae</taxon>
        <taxon>Neisseria</taxon>
    </lineage>
</organism>
<keyword id="KW-0378">Hydrolase</keyword>
<keyword id="KW-0511">Multifunctional enzyme</keyword>
<keyword id="KW-0658">Purine biosynthesis</keyword>
<keyword id="KW-0808">Transferase</keyword>
<proteinExistence type="inferred from homology"/>
<name>PUR9_NEIMF</name>